<keyword id="KW-0472">Membrane</keyword>
<keyword id="KW-1185">Reference proteome</keyword>
<keyword id="KW-0812">Transmembrane</keyword>
<keyword id="KW-1133">Transmembrane helix</keyword>
<sequence length="782" mass="88546">MKFIKRKTKLLTITIGAVAVSSILLGGIFYGTSQKSPSSFGIASIDQKENFINKDNLDYQKARPSIKDSNLKEIPKPKPQPKPKPQPTPFPDPIPTPPKKEELKKPDIKPEEPKKPEIKPEPKPEPIPQPAPPIETKPKEELLPPNPPPPKEEPKPEPNPQPQPQQVPNNSNSRIIEINGVRVEAEVEVPPPRDIAEYDKQNNLVNPNPYINDSVGKIKNVKVTDELRKATGKLVQGNLGRWDYKHLINDLLTLKPEEIEKYVKNDKSGYYAKVWYRFSRLFESENVVNFLTEQGKKEYPEMKSKFVSKDHKYAWLYQHLDLTKFTQLSNESESYLKEGYTPDPDNAYVDENGKISSHAYSPAKGYNSVTSRMENDNWNRRVFGYKSWYGRTPGNLVEGNYPGWKKTNVTQEFHQYGVSDGDGITVNKLTREKTEDGRLNEGYVIDIDADNPQGYEKTKKLIQTLKEKNINITGYRIHNMGKSDSSQKFVDILKTLPNQLPLLELFFSAGSHNTSSLIALKDKKIKELGLFTLGNSLLDEWSINPNALRNVEWINSNDYNVSFNYKQGADIATRITFDTLAFDESDYNDNASDIKSKLKQINDGLRMVYWTRNNEPIFQGSFGPGLDPDHKESGNSYPQGLDFSRVPQIRSLRGLIFKDEQKTSNNKDRKLRRINFYNNSTTYKMSIEDLNEAGFNEHIVSGEPGEKSKITFSNGSGTTKIQIDGDQELSANGISNLSAMFNFAESLQRTIVVNNTNSPLANQLRNAGYSVESTTNAGLIDI</sequence>
<organism>
    <name type="scientific">Ureaplasma parvum serovar 3 (strain ATCC 700970)</name>
    <dbReference type="NCBI Taxonomy" id="273119"/>
    <lineage>
        <taxon>Bacteria</taxon>
        <taxon>Bacillati</taxon>
        <taxon>Mycoplasmatota</taxon>
        <taxon>Mycoplasmoidales</taxon>
        <taxon>Mycoplasmoidaceae</taxon>
        <taxon>Ureaplasma</taxon>
    </lineage>
</organism>
<evidence type="ECO:0000255" key="1"/>
<evidence type="ECO:0000256" key="2">
    <source>
        <dbReference type="SAM" id="MobiDB-lite"/>
    </source>
</evidence>
<evidence type="ECO:0000305" key="3"/>
<dbReference type="EMBL" id="AF222894">
    <property type="protein sequence ID" value="AAF30449.1"/>
    <property type="molecule type" value="Genomic_DNA"/>
</dbReference>
<dbReference type="RefSeq" id="WP_006688509.1">
    <property type="nucleotide sequence ID" value="NC_002162.1"/>
</dbReference>
<dbReference type="SMR" id="Q9PRA1"/>
<dbReference type="STRING" id="273119.UU044"/>
<dbReference type="EnsemblBacteria" id="AAF30449">
    <property type="protein sequence ID" value="AAF30449"/>
    <property type="gene ID" value="UU044"/>
</dbReference>
<dbReference type="GeneID" id="29672318"/>
<dbReference type="KEGG" id="uur:UU044"/>
<dbReference type="eggNOG" id="COG0810">
    <property type="taxonomic scope" value="Bacteria"/>
</dbReference>
<dbReference type="HOGENOM" id="CLU_020577_0_0_14"/>
<dbReference type="OrthoDB" id="401311at2"/>
<dbReference type="Proteomes" id="UP000000423">
    <property type="component" value="Chromosome"/>
</dbReference>
<dbReference type="GO" id="GO:0016020">
    <property type="term" value="C:membrane"/>
    <property type="evidence" value="ECO:0007669"/>
    <property type="project" value="UniProtKB-SubCell"/>
</dbReference>
<dbReference type="InterPro" id="IPR030942">
    <property type="entry name" value="Mycoplas_M_dom"/>
</dbReference>
<dbReference type="InterPro" id="IPR030941">
    <property type="entry name" value="Predic_Ig_block"/>
</dbReference>
<dbReference type="NCBIfam" id="TIGR04524">
    <property type="entry name" value="mycoplas_M_dom"/>
    <property type="match status" value="1"/>
</dbReference>
<dbReference type="NCBIfam" id="TIGR04526">
    <property type="entry name" value="predic_Ig_block"/>
    <property type="match status" value="1"/>
</dbReference>
<feature type="chain" id="PRO_0000220788" description="Uncharacterized protein UU044">
    <location>
        <begin position="1"/>
        <end position="782"/>
    </location>
</feature>
<feature type="transmembrane region" description="Helical" evidence="1">
    <location>
        <begin position="10"/>
        <end position="30"/>
    </location>
</feature>
<feature type="region of interest" description="Disordered" evidence="2">
    <location>
        <begin position="57"/>
        <end position="171"/>
    </location>
</feature>
<feature type="compositionally biased region" description="Basic and acidic residues" evidence="2">
    <location>
        <begin position="57"/>
        <end position="76"/>
    </location>
</feature>
<feature type="compositionally biased region" description="Pro residues" evidence="2">
    <location>
        <begin position="77"/>
        <end position="97"/>
    </location>
</feature>
<feature type="compositionally biased region" description="Basic and acidic residues" evidence="2">
    <location>
        <begin position="98"/>
        <end position="124"/>
    </location>
</feature>
<feature type="compositionally biased region" description="Pro residues" evidence="2">
    <location>
        <begin position="125"/>
        <end position="135"/>
    </location>
</feature>
<accession>Q9PRA1</accession>
<proteinExistence type="predicted"/>
<reference key="1">
    <citation type="journal article" date="2000" name="Nature">
        <title>The complete sequence of the mucosal pathogen Ureaplasma urealyticum.</title>
        <authorList>
            <person name="Glass J.I."/>
            <person name="Lefkowitz E.J."/>
            <person name="Glass J.S."/>
            <person name="Heiner C.R."/>
            <person name="Chen E.Y."/>
            <person name="Cassell G.H."/>
        </authorList>
    </citation>
    <scope>NUCLEOTIDE SEQUENCE [LARGE SCALE GENOMIC DNA]</scope>
    <source>
        <strain>ATCC 700970</strain>
    </source>
</reference>
<protein>
    <recommendedName>
        <fullName>Uncharacterized protein UU044</fullName>
    </recommendedName>
</protein>
<comment type="subcellular location">
    <subcellularLocation>
        <location evidence="3">Membrane</location>
        <topology evidence="3">Single-pass membrane protein</topology>
    </subcellularLocation>
</comment>
<comment type="similarity">
    <text evidence="3">To U.parvum UU046.</text>
</comment>
<gene>
    <name type="ordered locus">UU044</name>
</gene>
<name>Y044_UREPA</name>